<organism>
    <name type="scientific">Zymomonas mobilis subsp. mobilis (strain ATCC 31821 / ZM4 / CP4)</name>
    <dbReference type="NCBI Taxonomy" id="264203"/>
    <lineage>
        <taxon>Bacteria</taxon>
        <taxon>Pseudomonadati</taxon>
        <taxon>Pseudomonadota</taxon>
        <taxon>Alphaproteobacteria</taxon>
        <taxon>Sphingomonadales</taxon>
        <taxon>Zymomonadaceae</taxon>
        <taxon>Zymomonas</taxon>
    </lineage>
</organism>
<reference key="1">
    <citation type="journal article" date="2005" name="Nat. Biotechnol.">
        <title>The genome sequence of the ethanologenic bacterium Zymomonas mobilis ZM4.</title>
        <authorList>
            <person name="Seo J.-S."/>
            <person name="Chong H."/>
            <person name="Park H.S."/>
            <person name="Yoon K.-O."/>
            <person name="Jung C."/>
            <person name="Kim J.J."/>
            <person name="Hong J.H."/>
            <person name="Kim H."/>
            <person name="Kim J.-H."/>
            <person name="Kil J.-I."/>
            <person name="Park C.J."/>
            <person name="Oh H.-M."/>
            <person name="Lee J.-S."/>
            <person name="Jin S.-J."/>
            <person name="Um H.-W."/>
            <person name="Lee H.-J."/>
            <person name="Oh S.-J."/>
            <person name="Kim J.Y."/>
            <person name="Kang H.L."/>
            <person name="Lee S.Y."/>
            <person name="Lee K.J."/>
            <person name="Kang H.S."/>
        </authorList>
    </citation>
    <scope>NUCLEOTIDE SEQUENCE [LARGE SCALE GENOMIC DNA]</scope>
    <source>
        <strain>ATCC 31821 / ZM4 / CP4</strain>
    </source>
</reference>
<keyword id="KW-1185">Reference proteome</keyword>
<keyword id="KW-0678">Repressor</keyword>
<keyword id="KW-0687">Ribonucleoprotein</keyword>
<keyword id="KW-0689">Ribosomal protein</keyword>
<keyword id="KW-0694">RNA-binding</keyword>
<keyword id="KW-0699">rRNA-binding</keyword>
<keyword id="KW-0810">Translation regulation</keyword>
<keyword id="KW-0820">tRNA-binding</keyword>
<gene>
    <name evidence="1" type="primary">rplA</name>
    <name type="ordered locus">ZMO0726</name>
</gene>
<sequence length="233" mass="24173">MAKLSKKAKAIAAAVDKNKLYTVAEAIALVREYATSKFDETIELAVNLGVDPRHADQMVRGVVTLPKGTGKNVRVGVFARGPKAEEAKAAGAEVVGAEDLMEAIQGGSIDFDRCIATPDMMGVVGRLGKILGPKGMMPNPKLGTVTMNVADAVKAAKGGQVEYRVDRTGIIHSGIGKASFSAEDIRANFDALIDALLKAKPAGAKGRYVKKVAISSTMGPGVSIDIADLPAAA</sequence>
<name>RL1_ZYMMO</name>
<proteinExistence type="inferred from homology"/>
<accession>Q5NPL0</accession>
<dbReference type="EMBL" id="AE008692">
    <property type="protein sequence ID" value="AAV89350.1"/>
    <property type="molecule type" value="Genomic_DNA"/>
</dbReference>
<dbReference type="RefSeq" id="WP_011240611.1">
    <property type="nucleotide sequence ID" value="NZ_CP035711.1"/>
</dbReference>
<dbReference type="SMR" id="Q5NPL0"/>
<dbReference type="STRING" id="264203.ZMO0726"/>
<dbReference type="GeneID" id="79904102"/>
<dbReference type="KEGG" id="zmo:ZMO0726"/>
<dbReference type="eggNOG" id="COG0081">
    <property type="taxonomic scope" value="Bacteria"/>
</dbReference>
<dbReference type="HOGENOM" id="CLU_062853_0_0_5"/>
<dbReference type="Proteomes" id="UP000001173">
    <property type="component" value="Chromosome"/>
</dbReference>
<dbReference type="GO" id="GO:0022625">
    <property type="term" value="C:cytosolic large ribosomal subunit"/>
    <property type="evidence" value="ECO:0007669"/>
    <property type="project" value="TreeGrafter"/>
</dbReference>
<dbReference type="GO" id="GO:0019843">
    <property type="term" value="F:rRNA binding"/>
    <property type="evidence" value="ECO:0007669"/>
    <property type="project" value="UniProtKB-UniRule"/>
</dbReference>
<dbReference type="GO" id="GO:0003735">
    <property type="term" value="F:structural constituent of ribosome"/>
    <property type="evidence" value="ECO:0007669"/>
    <property type="project" value="InterPro"/>
</dbReference>
<dbReference type="GO" id="GO:0000049">
    <property type="term" value="F:tRNA binding"/>
    <property type="evidence" value="ECO:0007669"/>
    <property type="project" value="UniProtKB-KW"/>
</dbReference>
<dbReference type="GO" id="GO:0006417">
    <property type="term" value="P:regulation of translation"/>
    <property type="evidence" value="ECO:0007669"/>
    <property type="project" value="UniProtKB-KW"/>
</dbReference>
<dbReference type="GO" id="GO:0006412">
    <property type="term" value="P:translation"/>
    <property type="evidence" value="ECO:0007669"/>
    <property type="project" value="UniProtKB-UniRule"/>
</dbReference>
<dbReference type="CDD" id="cd00403">
    <property type="entry name" value="Ribosomal_L1"/>
    <property type="match status" value="1"/>
</dbReference>
<dbReference type="FunFam" id="3.40.50.790:FF:000001">
    <property type="entry name" value="50S ribosomal protein L1"/>
    <property type="match status" value="1"/>
</dbReference>
<dbReference type="Gene3D" id="3.30.190.20">
    <property type="match status" value="1"/>
</dbReference>
<dbReference type="Gene3D" id="3.40.50.790">
    <property type="match status" value="1"/>
</dbReference>
<dbReference type="HAMAP" id="MF_01318_B">
    <property type="entry name" value="Ribosomal_uL1_B"/>
    <property type="match status" value="1"/>
</dbReference>
<dbReference type="InterPro" id="IPR005878">
    <property type="entry name" value="Ribosom_uL1_bac-type"/>
</dbReference>
<dbReference type="InterPro" id="IPR002143">
    <property type="entry name" value="Ribosomal_uL1"/>
</dbReference>
<dbReference type="InterPro" id="IPR023674">
    <property type="entry name" value="Ribosomal_uL1-like"/>
</dbReference>
<dbReference type="InterPro" id="IPR028364">
    <property type="entry name" value="Ribosomal_uL1/biogenesis"/>
</dbReference>
<dbReference type="InterPro" id="IPR016095">
    <property type="entry name" value="Ribosomal_uL1_3-a/b-sand"/>
</dbReference>
<dbReference type="InterPro" id="IPR023673">
    <property type="entry name" value="Ribosomal_uL1_CS"/>
</dbReference>
<dbReference type="NCBIfam" id="TIGR01169">
    <property type="entry name" value="rplA_bact"/>
    <property type="match status" value="1"/>
</dbReference>
<dbReference type="PANTHER" id="PTHR36427">
    <property type="entry name" value="54S RIBOSOMAL PROTEIN L1, MITOCHONDRIAL"/>
    <property type="match status" value="1"/>
</dbReference>
<dbReference type="PANTHER" id="PTHR36427:SF3">
    <property type="entry name" value="LARGE RIBOSOMAL SUBUNIT PROTEIN UL1M"/>
    <property type="match status" value="1"/>
</dbReference>
<dbReference type="Pfam" id="PF00687">
    <property type="entry name" value="Ribosomal_L1"/>
    <property type="match status" value="1"/>
</dbReference>
<dbReference type="PIRSF" id="PIRSF002155">
    <property type="entry name" value="Ribosomal_L1"/>
    <property type="match status" value="1"/>
</dbReference>
<dbReference type="SUPFAM" id="SSF56808">
    <property type="entry name" value="Ribosomal protein L1"/>
    <property type="match status" value="1"/>
</dbReference>
<dbReference type="PROSITE" id="PS01199">
    <property type="entry name" value="RIBOSOMAL_L1"/>
    <property type="match status" value="1"/>
</dbReference>
<protein>
    <recommendedName>
        <fullName evidence="1">Large ribosomal subunit protein uL1</fullName>
    </recommendedName>
    <alternativeName>
        <fullName evidence="2">50S ribosomal protein L1</fullName>
    </alternativeName>
</protein>
<evidence type="ECO:0000255" key="1">
    <source>
        <dbReference type="HAMAP-Rule" id="MF_01318"/>
    </source>
</evidence>
<evidence type="ECO:0000305" key="2"/>
<comment type="function">
    <text evidence="1">Binds directly to 23S rRNA. The L1 stalk is quite mobile in the ribosome, and is involved in E site tRNA release.</text>
</comment>
<comment type="function">
    <text evidence="1">Protein L1 is also a translational repressor protein, it controls the translation of the L11 operon by binding to its mRNA.</text>
</comment>
<comment type="subunit">
    <text evidence="1">Part of the 50S ribosomal subunit.</text>
</comment>
<comment type="similarity">
    <text evidence="1">Belongs to the universal ribosomal protein uL1 family.</text>
</comment>
<feature type="chain" id="PRO_0000125784" description="Large ribosomal subunit protein uL1">
    <location>
        <begin position="1"/>
        <end position="233"/>
    </location>
</feature>